<sequence>MSLEIVILAAGQGTRMRSALPKVLHPIAGKPMLGHVIDCARQLQPERIHVVIGHGADLVRERMAADDLNFVLQAEQLGTGHAVAQALPFLSADQVLILYGDVPLIQLDTLQRLLAQVTPDQLSLLTVDMLDPTGYGRIVRDDQGAVQAIVEHKDATPAQRQIGEINTGILAVPGKRLADWLGRLSNDNAQGEYYLTDVIAMAVGDGLVVASAQPLDAMEVQGVNDRMQQAQLERHYQRLRAEELMRQGVTLLDPQRLDVRGEISVGRDVLIDVNVVLEGRVVIEDDVRIGPNCVIRDSVLRRGAVIKANSHLEGAELGEGSDAGPFARLRPGSVLGARAHVGNFVELKNARLGEGSKAGHLSYLGDAELGANCNIGAGTITCNYDGANKFRTELGDDVFIGSNNSLVAPLKIGDGATTAAGSTITHEVPAKNLAFGRARQKNLENWKRPEKIKK</sequence>
<gene>
    <name evidence="1" type="primary">glmU</name>
    <name type="ordered locus">PA5552</name>
</gene>
<keyword id="KW-0012">Acyltransferase</keyword>
<keyword id="KW-0133">Cell shape</keyword>
<keyword id="KW-0961">Cell wall biogenesis/degradation</keyword>
<keyword id="KW-0963">Cytoplasm</keyword>
<keyword id="KW-0460">Magnesium</keyword>
<keyword id="KW-0479">Metal-binding</keyword>
<keyword id="KW-0511">Multifunctional enzyme</keyword>
<keyword id="KW-0548">Nucleotidyltransferase</keyword>
<keyword id="KW-0573">Peptidoglycan synthesis</keyword>
<keyword id="KW-1185">Reference proteome</keyword>
<keyword id="KW-0677">Repeat</keyword>
<keyword id="KW-0808">Transferase</keyword>
<reference key="1">
    <citation type="journal article" date="2000" name="Nature">
        <title>Complete genome sequence of Pseudomonas aeruginosa PAO1, an opportunistic pathogen.</title>
        <authorList>
            <person name="Stover C.K."/>
            <person name="Pham X.-Q.T."/>
            <person name="Erwin A.L."/>
            <person name="Mizoguchi S.D."/>
            <person name="Warrener P."/>
            <person name="Hickey M.J."/>
            <person name="Brinkman F.S.L."/>
            <person name="Hufnagle W.O."/>
            <person name="Kowalik D.J."/>
            <person name="Lagrou M."/>
            <person name="Garber R.L."/>
            <person name="Goltry L."/>
            <person name="Tolentino E."/>
            <person name="Westbrock-Wadman S."/>
            <person name="Yuan Y."/>
            <person name="Brody L.L."/>
            <person name="Coulter S.N."/>
            <person name="Folger K.R."/>
            <person name="Kas A."/>
            <person name="Larbig K."/>
            <person name="Lim R.M."/>
            <person name="Smith K.A."/>
            <person name="Spencer D.H."/>
            <person name="Wong G.K.-S."/>
            <person name="Wu Z."/>
            <person name="Paulsen I.T."/>
            <person name="Reizer J."/>
            <person name="Saier M.H. Jr."/>
            <person name="Hancock R.E.W."/>
            <person name="Lory S."/>
            <person name="Olson M.V."/>
        </authorList>
    </citation>
    <scope>NUCLEOTIDE SEQUENCE [LARGE SCALE GENOMIC DNA]</scope>
    <source>
        <strain>ATCC 15692 / DSM 22644 / CIP 104116 / JCM 14847 / LMG 12228 / 1C / PRS 101 / PAO1</strain>
    </source>
</reference>
<organism>
    <name type="scientific">Pseudomonas aeruginosa (strain ATCC 15692 / DSM 22644 / CIP 104116 / JCM 14847 / LMG 12228 / 1C / PRS 101 / PAO1)</name>
    <dbReference type="NCBI Taxonomy" id="208964"/>
    <lineage>
        <taxon>Bacteria</taxon>
        <taxon>Pseudomonadati</taxon>
        <taxon>Pseudomonadota</taxon>
        <taxon>Gammaproteobacteria</taxon>
        <taxon>Pseudomonadales</taxon>
        <taxon>Pseudomonadaceae</taxon>
        <taxon>Pseudomonas</taxon>
    </lineage>
</organism>
<accession>Q9HT22</accession>
<protein>
    <recommendedName>
        <fullName evidence="1">Bifunctional protein GlmU</fullName>
    </recommendedName>
    <domain>
        <recommendedName>
            <fullName evidence="1">UDP-N-acetylglucosamine pyrophosphorylase</fullName>
            <ecNumber evidence="1">2.7.7.23</ecNumber>
        </recommendedName>
        <alternativeName>
            <fullName evidence="1">N-acetylglucosamine-1-phosphate uridyltransferase</fullName>
        </alternativeName>
    </domain>
    <domain>
        <recommendedName>
            <fullName evidence="1">Glucosamine-1-phosphate N-acetyltransferase</fullName>
            <ecNumber evidence="1">2.3.1.157</ecNumber>
        </recommendedName>
    </domain>
</protein>
<comment type="function">
    <text evidence="1">Catalyzes the last two sequential reactions in the de novo biosynthetic pathway for UDP-N-acetylglucosamine (UDP-GlcNAc). The C-terminal domain catalyzes the transfer of acetyl group from acetyl coenzyme A to glucosamine-1-phosphate (GlcN-1-P) to produce N-acetylglucosamine-1-phosphate (GlcNAc-1-P), which is converted into UDP-GlcNAc by the transfer of uridine 5-monophosphate (from uridine 5-triphosphate), a reaction catalyzed by the N-terminal domain.</text>
</comment>
<comment type="catalytic activity">
    <reaction evidence="1">
        <text>alpha-D-glucosamine 1-phosphate + acetyl-CoA = N-acetyl-alpha-D-glucosamine 1-phosphate + CoA + H(+)</text>
        <dbReference type="Rhea" id="RHEA:13725"/>
        <dbReference type="ChEBI" id="CHEBI:15378"/>
        <dbReference type="ChEBI" id="CHEBI:57287"/>
        <dbReference type="ChEBI" id="CHEBI:57288"/>
        <dbReference type="ChEBI" id="CHEBI:57776"/>
        <dbReference type="ChEBI" id="CHEBI:58516"/>
        <dbReference type="EC" id="2.3.1.157"/>
    </reaction>
</comment>
<comment type="catalytic activity">
    <reaction evidence="1">
        <text>N-acetyl-alpha-D-glucosamine 1-phosphate + UTP + H(+) = UDP-N-acetyl-alpha-D-glucosamine + diphosphate</text>
        <dbReference type="Rhea" id="RHEA:13509"/>
        <dbReference type="ChEBI" id="CHEBI:15378"/>
        <dbReference type="ChEBI" id="CHEBI:33019"/>
        <dbReference type="ChEBI" id="CHEBI:46398"/>
        <dbReference type="ChEBI" id="CHEBI:57705"/>
        <dbReference type="ChEBI" id="CHEBI:57776"/>
        <dbReference type="EC" id="2.7.7.23"/>
    </reaction>
</comment>
<comment type="cofactor">
    <cofactor evidence="1">
        <name>Mg(2+)</name>
        <dbReference type="ChEBI" id="CHEBI:18420"/>
    </cofactor>
    <text evidence="1">Binds 1 Mg(2+) ion per subunit.</text>
</comment>
<comment type="pathway">
    <text evidence="1">Nucleotide-sugar biosynthesis; UDP-N-acetyl-alpha-D-glucosamine biosynthesis; N-acetyl-alpha-D-glucosamine 1-phosphate from alpha-D-glucosamine 6-phosphate (route II): step 2/2.</text>
</comment>
<comment type="pathway">
    <text evidence="1">Nucleotide-sugar biosynthesis; UDP-N-acetyl-alpha-D-glucosamine biosynthesis; UDP-N-acetyl-alpha-D-glucosamine from N-acetyl-alpha-D-glucosamine 1-phosphate: step 1/1.</text>
</comment>
<comment type="pathway">
    <text evidence="1">Bacterial outer membrane biogenesis; LPS lipid A biosynthesis.</text>
</comment>
<comment type="subunit">
    <text evidence="1">Homotrimer.</text>
</comment>
<comment type="subcellular location">
    <subcellularLocation>
        <location evidence="1">Cytoplasm</location>
    </subcellularLocation>
</comment>
<comment type="similarity">
    <text evidence="1">In the N-terminal section; belongs to the N-acetylglucosamine-1-phosphate uridyltransferase family.</text>
</comment>
<comment type="similarity">
    <text evidence="1">In the C-terminal section; belongs to the transferase hexapeptide repeat family.</text>
</comment>
<proteinExistence type="inferred from homology"/>
<name>GLMU_PSEAE</name>
<dbReference type="EC" id="2.7.7.23" evidence="1"/>
<dbReference type="EC" id="2.3.1.157" evidence="1"/>
<dbReference type="EMBL" id="AE004091">
    <property type="protein sequence ID" value="AAG08937.1"/>
    <property type="molecule type" value="Genomic_DNA"/>
</dbReference>
<dbReference type="PIR" id="A82952">
    <property type="entry name" value="A82952"/>
</dbReference>
<dbReference type="RefSeq" id="NP_254239.1">
    <property type="nucleotide sequence ID" value="NC_002516.2"/>
</dbReference>
<dbReference type="RefSeq" id="WP_003114651.1">
    <property type="nucleotide sequence ID" value="NZ_QZGE01000012.1"/>
</dbReference>
<dbReference type="SMR" id="Q9HT22"/>
<dbReference type="FunCoup" id="Q9HT22">
    <property type="interactions" value="601"/>
</dbReference>
<dbReference type="STRING" id="208964.PA5552"/>
<dbReference type="PaxDb" id="208964-PA5552"/>
<dbReference type="GeneID" id="877892"/>
<dbReference type="KEGG" id="pae:PA5552"/>
<dbReference type="PATRIC" id="fig|208964.12.peg.5818"/>
<dbReference type="PseudoCAP" id="PA5552"/>
<dbReference type="HOGENOM" id="CLU_029499_15_2_6"/>
<dbReference type="InParanoid" id="Q9HT22"/>
<dbReference type="OrthoDB" id="9775031at2"/>
<dbReference type="PhylomeDB" id="Q9HT22"/>
<dbReference type="BioCyc" id="PAER208964:G1FZ6-5679-MONOMER"/>
<dbReference type="UniPathway" id="UPA00113">
    <property type="reaction ID" value="UER00532"/>
</dbReference>
<dbReference type="UniPathway" id="UPA00113">
    <property type="reaction ID" value="UER00533"/>
</dbReference>
<dbReference type="UniPathway" id="UPA00973"/>
<dbReference type="Proteomes" id="UP000002438">
    <property type="component" value="Chromosome"/>
</dbReference>
<dbReference type="GO" id="GO:0005737">
    <property type="term" value="C:cytoplasm"/>
    <property type="evidence" value="ECO:0007669"/>
    <property type="project" value="UniProtKB-SubCell"/>
</dbReference>
<dbReference type="GO" id="GO:0016020">
    <property type="term" value="C:membrane"/>
    <property type="evidence" value="ECO:0007669"/>
    <property type="project" value="GOC"/>
</dbReference>
<dbReference type="GO" id="GO:0019134">
    <property type="term" value="F:glucosamine-1-phosphate N-acetyltransferase activity"/>
    <property type="evidence" value="ECO:0007669"/>
    <property type="project" value="UniProtKB-UniRule"/>
</dbReference>
<dbReference type="GO" id="GO:0000287">
    <property type="term" value="F:magnesium ion binding"/>
    <property type="evidence" value="ECO:0007669"/>
    <property type="project" value="UniProtKB-UniRule"/>
</dbReference>
<dbReference type="GO" id="GO:0003977">
    <property type="term" value="F:UDP-N-acetylglucosamine diphosphorylase activity"/>
    <property type="evidence" value="ECO:0007669"/>
    <property type="project" value="UniProtKB-UniRule"/>
</dbReference>
<dbReference type="GO" id="GO:0000902">
    <property type="term" value="P:cell morphogenesis"/>
    <property type="evidence" value="ECO:0007669"/>
    <property type="project" value="UniProtKB-UniRule"/>
</dbReference>
<dbReference type="GO" id="GO:0071555">
    <property type="term" value="P:cell wall organization"/>
    <property type="evidence" value="ECO:0007669"/>
    <property type="project" value="UniProtKB-KW"/>
</dbReference>
<dbReference type="GO" id="GO:0009245">
    <property type="term" value="P:lipid A biosynthetic process"/>
    <property type="evidence" value="ECO:0007669"/>
    <property type="project" value="UniProtKB-UniRule"/>
</dbReference>
<dbReference type="GO" id="GO:0009252">
    <property type="term" value="P:peptidoglycan biosynthetic process"/>
    <property type="evidence" value="ECO:0007669"/>
    <property type="project" value="UniProtKB-UniRule"/>
</dbReference>
<dbReference type="GO" id="GO:0008360">
    <property type="term" value="P:regulation of cell shape"/>
    <property type="evidence" value="ECO:0007669"/>
    <property type="project" value="UniProtKB-KW"/>
</dbReference>
<dbReference type="GO" id="GO:0006048">
    <property type="term" value="P:UDP-N-acetylglucosamine biosynthetic process"/>
    <property type="evidence" value="ECO:0007669"/>
    <property type="project" value="UniProtKB-UniPathway"/>
</dbReference>
<dbReference type="CDD" id="cd02540">
    <property type="entry name" value="GT2_GlmU_N_bac"/>
    <property type="match status" value="1"/>
</dbReference>
<dbReference type="CDD" id="cd03353">
    <property type="entry name" value="LbH_GlmU_C"/>
    <property type="match status" value="1"/>
</dbReference>
<dbReference type="Gene3D" id="2.160.10.10">
    <property type="entry name" value="Hexapeptide repeat proteins"/>
    <property type="match status" value="1"/>
</dbReference>
<dbReference type="Gene3D" id="3.90.550.10">
    <property type="entry name" value="Spore Coat Polysaccharide Biosynthesis Protein SpsA, Chain A"/>
    <property type="match status" value="1"/>
</dbReference>
<dbReference type="HAMAP" id="MF_01631">
    <property type="entry name" value="GlmU"/>
    <property type="match status" value="1"/>
</dbReference>
<dbReference type="InterPro" id="IPR005882">
    <property type="entry name" value="Bifunctional_GlmU"/>
</dbReference>
<dbReference type="InterPro" id="IPR050065">
    <property type="entry name" value="GlmU-like"/>
</dbReference>
<dbReference type="InterPro" id="IPR038009">
    <property type="entry name" value="GlmU_C_LbH"/>
</dbReference>
<dbReference type="InterPro" id="IPR001451">
    <property type="entry name" value="Hexapep"/>
</dbReference>
<dbReference type="InterPro" id="IPR025877">
    <property type="entry name" value="MobA-like_NTP_Trfase"/>
</dbReference>
<dbReference type="InterPro" id="IPR029044">
    <property type="entry name" value="Nucleotide-diphossugar_trans"/>
</dbReference>
<dbReference type="InterPro" id="IPR011004">
    <property type="entry name" value="Trimer_LpxA-like_sf"/>
</dbReference>
<dbReference type="NCBIfam" id="TIGR01173">
    <property type="entry name" value="glmU"/>
    <property type="match status" value="1"/>
</dbReference>
<dbReference type="PANTHER" id="PTHR43584:SF3">
    <property type="entry name" value="BIFUNCTIONAL PROTEIN GLMU"/>
    <property type="match status" value="1"/>
</dbReference>
<dbReference type="PANTHER" id="PTHR43584">
    <property type="entry name" value="NUCLEOTIDYL TRANSFERASE"/>
    <property type="match status" value="1"/>
</dbReference>
<dbReference type="Pfam" id="PF00132">
    <property type="entry name" value="Hexapep"/>
    <property type="match status" value="2"/>
</dbReference>
<dbReference type="Pfam" id="PF12804">
    <property type="entry name" value="NTP_transf_3"/>
    <property type="match status" value="1"/>
</dbReference>
<dbReference type="SUPFAM" id="SSF53448">
    <property type="entry name" value="Nucleotide-diphospho-sugar transferases"/>
    <property type="match status" value="1"/>
</dbReference>
<dbReference type="SUPFAM" id="SSF51161">
    <property type="entry name" value="Trimeric LpxA-like enzymes"/>
    <property type="match status" value="1"/>
</dbReference>
<feature type="chain" id="PRO_0000233821" description="Bifunctional protein GlmU">
    <location>
        <begin position="1"/>
        <end position="454"/>
    </location>
</feature>
<feature type="region of interest" description="Pyrophosphorylase" evidence="1">
    <location>
        <begin position="1"/>
        <end position="226"/>
    </location>
</feature>
<feature type="region of interest" description="Linker" evidence="1">
    <location>
        <begin position="227"/>
        <end position="247"/>
    </location>
</feature>
<feature type="region of interest" description="N-acetyltransferase" evidence="1">
    <location>
        <begin position="248"/>
        <end position="454"/>
    </location>
</feature>
<feature type="active site" description="Proton acceptor" evidence="1">
    <location>
        <position position="360"/>
    </location>
</feature>
<feature type="binding site" evidence="1">
    <location>
        <begin position="8"/>
        <end position="11"/>
    </location>
    <ligand>
        <name>UDP-N-acetyl-alpha-D-glucosamine</name>
        <dbReference type="ChEBI" id="CHEBI:57705"/>
    </ligand>
</feature>
<feature type="binding site" evidence="1">
    <location>
        <position position="22"/>
    </location>
    <ligand>
        <name>UDP-N-acetyl-alpha-D-glucosamine</name>
        <dbReference type="ChEBI" id="CHEBI:57705"/>
    </ligand>
</feature>
<feature type="binding site" evidence="1">
    <location>
        <position position="73"/>
    </location>
    <ligand>
        <name>UDP-N-acetyl-alpha-D-glucosamine</name>
        <dbReference type="ChEBI" id="CHEBI:57705"/>
    </ligand>
</feature>
<feature type="binding site" evidence="1">
    <location>
        <begin position="78"/>
        <end position="79"/>
    </location>
    <ligand>
        <name>UDP-N-acetyl-alpha-D-glucosamine</name>
        <dbReference type="ChEBI" id="CHEBI:57705"/>
    </ligand>
</feature>
<feature type="binding site" evidence="1">
    <location>
        <begin position="99"/>
        <end position="101"/>
    </location>
    <ligand>
        <name>UDP-N-acetyl-alpha-D-glucosamine</name>
        <dbReference type="ChEBI" id="CHEBI:57705"/>
    </ligand>
</feature>
<feature type="binding site" evidence="1">
    <location>
        <position position="101"/>
    </location>
    <ligand>
        <name>Mg(2+)</name>
        <dbReference type="ChEBI" id="CHEBI:18420"/>
    </ligand>
</feature>
<feature type="binding site" evidence="1">
    <location>
        <position position="136"/>
    </location>
    <ligand>
        <name>UDP-N-acetyl-alpha-D-glucosamine</name>
        <dbReference type="ChEBI" id="CHEBI:57705"/>
    </ligand>
</feature>
<feature type="binding site" evidence="1">
    <location>
        <position position="151"/>
    </location>
    <ligand>
        <name>UDP-N-acetyl-alpha-D-glucosamine</name>
        <dbReference type="ChEBI" id="CHEBI:57705"/>
    </ligand>
</feature>
<feature type="binding site" evidence="1">
    <location>
        <position position="166"/>
    </location>
    <ligand>
        <name>UDP-N-acetyl-alpha-D-glucosamine</name>
        <dbReference type="ChEBI" id="CHEBI:57705"/>
    </ligand>
</feature>
<feature type="binding site" evidence="1">
    <location>
        <position position="224"/>
    </location>
    <ligand>
        <name>Mg(2+)</name>
        <dbReference type="ChEBI" id="CHEBI:18420"/>
    </ligand>
</feature>
<feature type="binding site" evidence="1">
    <location>
        <position position="224"/>
    </location>
    <ligand>
        <name>UDP-N-acetyl-alpha-D-glucosamine</name>
        <dbReference type="ChEBI" id="CHEBI:57705"/>
    </ligand>
</feature>
<feature type="binding site" evidence="1">
    <location>
        <position position="330"/>
    </location>
    <ligand>
        <name>UDP-N-acetyl-alpha-D-glucosamine</name>
        <dbReference type="ChEBI" id="CHEBI:57705"/>
    </ligand>
</feature>
<feature type="binding site" evidence="1">
    <location>
        <position position="348"/>
    </location>
    <ligand>
        <name>UDP-N-acetyl-alpha-D-glucosamine</name>
        <dbReference type="ChEBI" id="CHEBI:57705"/>
    </ligand>
</feature>
<feature type="binding site" evidence="1">
    <location>
        <position position="363"/>
    </location>
    <ligand>
        <name>UDP-N-acetyl-alpha-D-glucosamine</name>
        <dbReference type="ChEBI" id="CHEBI:57705"/>
    </ligand>
</feature>
<feature type="binding site" evidence="1">
    <location>
        <position position="374"/>
    </location>
    <ligand>
        <name>UDP-N-acetyl-alpha-D-glucosamine</name>
        <dbReference type="ChEBI" id="CHEBI:57705"/>
    </ligand>
</feature>
<feature type="binding site" evidence="1">
    <location>
        <position position="377"/>
    </location>
    <ligand>
        <name>acetyl-CoA</name>
        <dbReference type="ChEBI" id="CHEBI:57288"/>
    </ligand>
</feature>
<feature type="binding site" evidence="1">
    <location>
        <begin position="383"/>
        <end position="384"/>
    </location>
    <ligand>
        <name>acetyl-CoA</name>
        <dbReference type="ChEBI" id="CHEBI:57288"/>
    </ligand>
</feature>
<feature type="binding site" evidence="1">
    <location>
        <position position="402"/>
    </location>
    <ligand>
        <name>acetyl-CoA</name>
        <dbReference type="ChEBI" id="CHEBI:57288"/>
    </ligand>
</feature>
<feature type="binding site" evidence="1">
    <location>
        <position position="420"/>
    </location>
    <ligand>
        <name>acetyl-CoA</name>
        <dbReference type="ChEBI" id="CHEBI:57288"/>
    </ligand>
</feature>
<feature type="binding site" evidence="1">
    <location>
        <position position="437"/>
    </location>
    <ligand>
        <name>acetyl-CoA</name>
        <dbReference type="ChEBI" id="CHEBI:57288"/>
    </ligand>
</feature>
<evidence type="ECO:0000255" key="1">
    <source>
        <dbReference type="HAMAP-Rule" id="MF_01631"/>
    </source>
</evidence>